<proteinExistence type="evidence at protein level"/>
<comment type="function">
    <text evidence="7 8 9 11 12 13 14">Ribonuclease (RNase) III involved in RNA-mediated post-transcriptional gene silencing (PTGS). Functions in the microRNAs (miRNAs) biogenesis pathway by cleaving primary miRNAs (pri-miRNAs) and precursor miRNAs (pre-miRNAs). Functions with DRB1/HYL1 and SERRATE proteins for accurate pri-miRNAs to miRNAs processing. Indirectly involved in the production of trans-acting small interfering RNAs (ta-siRNAs) derived from the TAS1, TAS2 or TAS3 endogenous transcripts by participating in the production of their initiating miRNAs. Involved in the processing of natural siRNAs (nat-siRNAs, derived from cis-natural antisense transcripts) by cleaving 24 nucleotide nat-siRNAs into 21 nucleotide nat-siRNAs. Can produce RDR6-dependent endogenous ta-siRNAs derived from TAS1 and TAS2. Required for the production of 30-40 nucleotide bacterial-induced long siRNAs (lsiRNA). Acts redundantly with DICER-LIKE 3 (DCL3) to promote flowering via repression of FLOWERING LOCUS C (FLC). Represses antiviral RNA silencing through negative regulation of the expression of DCL4 and DCL3.</text>
</comment>
<comment type="cofactor">
    <cofactor evidence="1">
        <name>Mg(2+)</name>
        <dbReference type="ChEBI" id="CHEBI:18420"/>
    </cofactor>
    <cofactor evidence="1">
        <name>Mn(2+)</name>
        <dbReference type="ChEBI" id="CHEBI:29035"/>
    </cofactor>
</comment>
<comment type="subunit">
    <text evidence="1">Interacts (via N-terminus) with DDL. Interacts (via DRBM domains) with DRB1, DRB2 and DRB5. May interact with AGO1 or AGO10 through their common PAZ domains (By similarity).</text>
</comment>
<comment type="interaction">
    <interactant intactId="EBI-632627">
        <id>Q9SP32</id>
    </interactant>
    <interactant intactId="EBI-2015534">
        <id>Q8W4D8</id>
        <label>DDL</label>
    </interactant>
    <organismsDiffer>false</organismsDiffer>
    <experiments>2</experiments>
</comment>
<comment type="interaction">
    <interactant intactId="EBI-632627">
        <id>Q9SP32</id>
    </interactant>
    <interactant intactId="EBI-632620">
        <id>O04492</id>
        <label>DRB1</label>
    </interactant>
    <organismsDiffer>false</organismsDiffer>
    <experiments>3</experiments>
</comment>
<comment type="subcellular location">
    <subcellularLocation>
        <location evidence="7 10">Nucleus</location>
    </subcellularLocation>
    <text>Localizes to nuclear dicing body (also named D body), a nuclear body distributed throughout the nucleoplasm and involved in miRNA processing.</text>
</comment>
<comment type="alternative products">
    <event type="alternative splicing"/>
    <isoform>
        <id>Q9SP32-1</id>
        <name>1</name>
        <sequence type="displayed"/>
    </isoform>
    <text>A number of isoforms are produced. According to EST sequences.</text>
</comment>
<comment type="tissue specificity">
    <text evidence="5 6">Highly expressed in flowers and seeds and detected in leaves and stems. Found in ovule integuments, inflorescence and floral meristems, stigma of flowers until just before pollination, vasculature of the funiculus, and embryo.</text>
</comment>
<comment type="developmental stage">
    <text evidence="6">Detected in the embryo, but not in the suspensor, up to the globular stage.</text>
</comment>
<comment type="disruption phenotype">
    <text evidence="5 6">Embryonic lethality in sus-1 mutant. Weaker mutant (caf-1) also exists. Mutant caf-1 produces extra whorls of stamens, indefinite number of carpels and show an absence of axillary inflorescence meristems and abnormally shaped leaves and floral organs.</text>
</comment>
<comment type="miscellaneous">
    <text>Expression in the early embryo is from the maternally contributed genome.</text>
</comment>
<comment type="similarity">
    <text evidence="16">Belongs to the helicase family. Dicer subfamily.</text>
</comment>
<comment type="sequence caution" evidence="16">
    <conflict type="erroneous gene model prediction">
        <sequence resource="EMBL-CDS" id="AAF26461"/>
    </conflict>
</comment>
<name>DCL1_ARATH</name>
<evidence type="ECO:0000250" key="1"/>
<evidence type="ECO:0000255" key="2"/>
<evidence type="ECO:0000255" key="3">
    <source>
        <dbReference type="PROSITE-ProRule" id="PRU00142"/>
    </source>
</evidence>
<evidence type="ECO:0000256" key="4">
    <source>
        <dbReference type="SAM" id="MobiDB-lite"/>
    </source>
</evidence>
<evidence type="ECO:0000269" key="5">
    <source>
    </source>
</evidence>
<evidence type="ECO:0000269" key="6">
    <source>
    </source>
</evidence>
<evidence type="ECO:0000269" key="7">
    <source>
    </source>
</evidence>
<evidence type="ECO:0000269" key="8">
    <source>
    </source>
</evidence>
<evidence type="ECO:0000269" key="9">
    <source>
    </source>
</evidence>
<evidence type="ECO:0000269" key="10">
    <source>
    </source>
</evidence>
<evidence type="ECO:0000269" key="11">
    <source>
    </source>
</evidence>
<evidence type="ECO:0000269" key="12">
    <source>
    </source>
</evidence>
<evidence type="ECO:0000269" key="13">
    <source>
    </source>
</evidence>
<evidence type="ECO:0000269" key="14">
    <source>
    </source>
</evidence>
<evidence type="ECO:0000269" key="15">
    <source>
    </source>
</evidence>
<evidence type="ECO:0000305" key="16"/>
<evidence type="ECO:0007829" key="17">
    <source>
        <dbReference type="PDB" id="2LRS"/>
    </source>
</evidence>
<organism>
    <name type="scientific">Arabidopsis thaliana</name>
    <name type="common">Mouse-ear cress</name>
    <dbReference type="NCBI Taxonomy" id="3702"/>
    <lineage>
        <taxon>Eukaryota</taxon>
        <taxon>Viridiplantae</taxon>
        <taxon>Streptophyta</taxon>
        <taxon>Embryophyta</taxon>
        <taxon>Tracheophyta</taxon>
        <taxon>Spermatophyta</taxon>
        <taxon>Magnoliopsida</taxon>
        <taxon>eudicotyledons</taxon>
        <taxon>Gunneridae</taxon>
        <taxon>Pentapetalae</taxon>
        <taxon>rosids</taxon>
        <taxon>malvids</taxon>
        <taxon>Brassicales</taxon>
        <taxon>Brassicaceae</taxon>
        <taxon>Camelineae</taxon>
        <taxon>Arabidopsis</taxon>
    </lineage>
</organism>
<protein>
    <recommendedName>
        <fullName>Endoribonuclease Dicer homolog 1</fullName>
        <ecNumber>3.1.26.-</ecNumber>
    </recommendedName>
    <alternativeName>
        <fullName>Dicer-like protein 1</fullName>
        <shortName>AtDCL1</shortName>
    </alternativeName>
    <alternativeName>
        <fullName>Protein ABNORMAL SUSPENSOR 1</fullName>
    </alternativeName>
    <alternativeName>
        <fullName>Protein CARPEL FACTORY</fullName>
    </alternativeName>
    <alternativeName>
        <fullName>Protein SHORT INTEGUMENTS 1</fullName>
    </alternativeName>
    <alternativeName>
        <fullName>Protein SUSPENSOR 1</fullName>
    </alternativeName>
</protein>
<sequence>MVMEDEPREATIKPSYWLDACEDISCDLIDDLVSEFDPSSVAVNESTDENGVINDFFGGIDHILDSIKNGGGLPNNGVSDTNSQINEVTVTPQVIAKETVKENGLQKNGGKRDEFSKEEGDKDRKRARVCSYQSERSNLSGRGHVNNSREGDRFMNRKRTRNWDEAGNNKKKRECNNYRRDGRDREVRGYWERDKVGSNELVYRSGTWEADHERDVKKVSGGNRECDVKAEENKSKPEERKEKVVEEQARRYQLDVLEQAKAKNTIAFLETGAGKTLIAILLIKSVHKDLMSQNRKMLSVFLVPKVPLVYQQAEVIRNQTCFQVGHYCGEMGQDFWDSRRWQREFESKQVLVMTAQILLNILRHSIIRMETIDLLILDECHHAVKKHPYSLVMSEFYHTTPKDKRPAIFGMTASPVNLKGVSSQVDCAIKIRNLETKLDSTVCTIKDRKELEKHVPMPSEIVVEYDKAATMWSLHETIKQMIAAVEEAAQASSRKSKWQFMGARDAGAKDELRQVYGVSERTESDGAANLIHKLRAINYTLAELGQWCAYKVGQSFLSALQSDERVNFQVDVKFQESYLSEVVSLLQCELLEGAAAEKVAAEVGKPENGNAHDEMEEGELPDDPVVSGGEHVDEVIGAAVADGKVTPKVQSLIKLLLKYQHTADFRAIVFVERVVAALVLPKVFAELPSLSFIRCASMIGHNNSQEMKSSQMQDTISKFRDGHVTLLVATSVAEEGLDIRQCNVVMRFDLAKTVLAYIQSRGRARKPGSDYILMVERGNVSHAAFLRNARNSEETLRKEAIERTDLSHLKDTSRLISIDAVPGTVYKVEATGAMVSLNSAVGLVHFYCSQLPGDRYAILRPEFSMEKHEKPGGHTEYSCRLQLPCNAPFEILEGPVCSSMRLAQQAVCLAACKKLHEMGAFTDMLLPDKGSGQDAEKADQDDEGEPVPGTARHREFYPEGVADVLKGEWVSSGKEVCESSKLFHLYMYNVRCVDFGSSKDPFLSEVSEFAILFGNELDAEVLSMSMDLYVARAMITKASLAFKGSLDITENQLSSLKKFHVRLMSIVLDVDVEPSTTPWDPAKAYLFVPVTDNTSMEPIKGINWELVEKITKTTAWDNPLQRARPDVYLGTNERTLGGDRREYGFGKLRHNIVFGQKSHPTYGIRGAVASFDVVRASGLLPVRDAFEKEVEEDLSKGKLMMADGCMVAEDLIGKIVTAAHSGKRFYVDSICYDMSAETSFPRKEGYLGPLEYNTYADYYKQKYGVDLNCKQQPLIKGRGVSYCKNLLSPRFEQSGESETVLDKTYYVFLPPELCVVHPLSGSLIRGAQRLPSIMRRVESMLLAVQLKNLISYPIPTSKILEALTAASCQETFCYERAELLGDAYLKWVVSRFLFLKYPQKHEGQLTRMRQQMVSNMVLYQFALVKGLQSYIQADRFAPSRWSAPGVPPVFDEDTKDGGSSFFDEEQKPVSEENSDVFEDGEMEDGELEGDLSSYRVLSSKTLADVVEALIGVYYVEGGKIAANHLMKWIGIHVEDDPDEVDGTLKNVNVPESVLKSIDFVGLERALKYEFKEKGLLVEAITHASRPSSGVSCYQRLEFVGDAVLDHLITRHLFFTYTSLPPGRLTDLRAAAVNNENFARVAVKHKLHLYLRHGSSALEKQIREFVKEVQTESSKPGFNSFGLGDCKAPKVLGDIVESIAGAIFLDSGKDTTAAWKVFQPLLQPMVTPETLPMHPVRELQERCQQQAEGLEYKASRSGNTATVEVFIDGVQVGVAQNPQKKMAQKLAARNALAALKEKEIAESKEKHINNGNAGEDQGENENGNKKNGHQPFTRQTLNDICLRKNWPMPSYRCVKEGGPAHAKRFTFGVRVNTSDRGWTDECIGEPMPSVKKAKDSAAVLLLELLNKTFS</sequence>
<keyword id="KW-0002">3D-structure</keyword>
<keyword id="KW-0025">Alternative splicing</keyword>
<keyword id="KW-0067">ATP-binding</keyword>
<keyword id="KW-0255">Endonuclease</keyword>
<keyword id="KW-0347">Helicase</keyword>
<keyword id="KW-0378">Hydrolase</keyword>
<keyword id="KW-0460">Magnesium</keyword>
<keyword id="KW-0464">Manganese</keyword>
<keyword id="KW-0479">Metal-binding</keyword>
<keyword id="KW-0540">Nuclease</keyword>
<keyword id="KW-0547">Nucleotide-binding</keyword>
<keyword id="KW-0539">Nucleus</keyword>
<keyword id="KW-1185">Reference proteome</keyword>
<keyword id="KW-0677">Repeat</keyword>
<keyword id="KW-0694">RNA-binding</keyword>
<keyword id="KW-0943">RNA-mediated gene silencing</keyword>
<gene>
    <name type="primary">DCL1</name>
    <name type="synonym">ASU1</name>
    <name type="synonym">CAF SIN1</name>
    <name type="synonym">SUS1</name>
    <name type="ordered locus">At1g01040</name>
    <name type="ORF">T25K16.4</name>
</gene>
<accession>Q9SP32</accession>
<accession>Q9FDY6</accession>
<accession>Q9MAN0</accession>
<reference key="1">
    <citation type="journal article" date="1999" name="Development">
        <title>Disruption of an RNA helicase/RNase III gene in Arabidopsis causes unregulated cell division in floral meristems.</title>
        <authorList>
            <person name="Jacobsen S.E."/>
            <person name="Running M.P."/>
            <person name="Meyerowitz E.M."/>
        </authorList>
    </citation>
    <scope>NUCLEOTIDE SEQUENCE [MRNA]</scope>
    <scope>TISSUE SPECIFICITY</scope>
    <scope>DISRUPTION PHENOTYPE</scope>
    <scope>MUTAGENESIS OF 1837-ASN--LYS-1843 AND 1844-ASN--SER-1909</scope>
    <source>
        <strain>cv. Wassilewskija</strain>
    </source>
</reference>
<reference key="2">
    <citation type="journal article" date="2002" name="Plant Physiol.">
        <title>SHORT INTEGUMENTS1/SUSPENSOR1/CARPEL FACTORY, a Dicer homolog, is a maternal effect gene required for embryo development in Arabidopsis.</title>
        <authorList>
            <person name="Golden T.A."/>
            <person name="Schauer S.E."/>
            <person name="Lang J.D."/>
            <person name="Pien S."/>
            <person name="Mushegian A.R."/>
            <person name="Grossniklaus U."/>
            <person name="Meinke D.W."/>
            <person name="Ray A."/>
        </authorList>
    </citation>
    <scope>NUCLEOTIDE SEQUENCE [GENOMIC DNA / MRNA]</scope>
    <scope>TISSUE SPECIFICITY</scope>
    <scope>DEVELOPMENTAL STAGE</scope>
    <scope>DISRUPTION PHENOTYPE</scope>
    <scope>MUTAGENESIS OF PRO-415 AND ILE-431</scope>
    <source>
        <strain>cv. Landsberg erecta</strain>
    </source>
</reference>
<reference key="3">
    <citation type="journal article" date="2000" name="Nature">
        <title>Sequence and analysis of chromosome 1 of the plant Arabidopsis thaliana.</title>
        <authorList>
            <person name="Theologis A."/>
            <person name="Ecker J.R."/>
            <person name="Palm C.J."/>
            <person name="Federspiel N.A."/>
            <person name="Kaul S."/>
            <person name="White O."/>
            <person name="Alonso J."/>
            <person name="Altafi H."/>
            <person name="Araujo R."/>
            <person name="Bowman C.L."/>
            <person name="Brooks S.Y."/>
            <person name="Buehler E."/>
            <person name="Chan A."/>
            <person name="Chao Q."/>
            <person name="Chen H."/>
            <person name="Cheuk R.F."/>
            <person name="Chin C.W."/>
            <person name="Chung M.K."/>
            <person name="Conn L."/>
            <person name="Conway A.B."/>
            <person name="Conway A.R."/>
            <person name="Creasy T.H."/>
            <person name="Dewar K."/>
            <person name="Dunn P."/>
            <person name="Etgu P."/>
            <person name="Feldblyum T.V."/>
            <person name="Feng J.-D."/>
            <person name="Fong B."/>
            <person name="Fujii C.Y."/>
            <person name="Gill J.E."/>
            <person name="Goldsmith A.D."/>
            <person name="Haas B."/>
            <person name="Hansen N.F."/>
            <person name="Hughes B."/>
            <person name="Huizar L."/>
            <person name="Hunter J.L."/>
            <person name="Jenkins J."/>
            <person name="Johnson-Hopson C."/>
            <person name="Khan S."/>
            <person name="Khaykin E."/>
            <person name="Kim C.J."/>
            <person name="Koo H.L."/>
            <person name="Kremenetskaia I."/>
            <person name="Kurtz D.B."/>
            <person name="Kwan A."/>
            <person name="Lam B."/>
            <person name="Langin-Hooper S."/>
            <person name="Lee A."/>
            <person name="Lee J.M."/>
            <person name="Lenz C.A."/>
            <person name="Li J.H."/>
            <person name="Li Y.-P."/>
            <person name="Lin X."/>
            <person name="Liu S.X."/>
            <person name="Liu Z.A."/>
            <person name="Luros J.S."/>
            <person name="Maiti R."/>
            <person name="Marziali A."/>
            <person name="Militscher J."/>
            <person name="Miranda M."/>
            <person name="Nguyen M."/>
            <person name="Nierman W.C."/>
            <person name="Osborne B.I."/>
            <person name="Pai G."/>
            <person name="Peterson J."/>
            <person name="Pham P.K."/>
            <person name="Rizzo M."/>
            <person name="Rooney T."/>
            <person name="Rowley D."/>
            <person name="Sakano H."/>
            <person name="Salzberg S.L."/>
            <person name="Schwartz J.R."/>
            <person name="Shinn P."/>
            <person name="Southwick A.M."/>
            <person name="Sun H."/>
            <person name="Tallon L.J."/>
            <person name="Tambunga G."/>
            <person name="Toriumi M.J."/>
            <person name="Town C.D."/>
            <person name="Utterback T."/>
            <person name="Van Aken S."/>
            <person name="Vaysberg M."/>
            <person name="Vysotskaia V.S."/>
            <person name="Walker M."/>
            <person name="Wu D."/>
            <person name="Yu G."/>
            <person name="Fraser C.M."/>
            <person name="Venter J.C."/>
            <person name="Davis R.W."/>
        </authorList>
    </citation>
    <scope>NUCLEOTIDE SEQUENCE [LARGE SCALE GENOMIC DNA]</scope>
    <source>
        <strain>cv. Columbia</strain>
    </source>
</reference>
<reference key="4">
    <citation type="journal article" date="2017" name="Plant J.">
        <title>Araport11: a complete reannotation of the Arabidopsis thaliana reference genome.</title>
        <authorList>
            <person name="Cheng C.Y."/>
            <person name="Krishnakumar V."/>
            <person name="Chan A.P."/>
            <person name="Thibaud-Nissen F."/>
            <person name="Schobel S."/>
            <person name="Town C.D."/>
        </authorList>
    </citation>
    <scope>GENOME REANNOTATION</scope>
    <source>
        <strain>cv. Columbia</strain>
    </source>
</reference>
<reference key="5">
    <citation type="journal article" date="2005" name="Curr. Biol.">
        <title>Partially redundant functions of Arabidopsis DICER-like enzymes and a role for DCL4 in producing trans-acting siRNAs.</title>
        <authorList>
            <person name="Gasciolli V."/>
            <person name="Mallory A.C."/>
            <person name="Bartel D.P."/>
            <person name="Vaucheret H."/>
        </authorList>
    </citation>
    <scope>FUNCTION</scope>
</reference>
<reference key="6">
    <citation type="journal article" date="2005" name="Plant Mol. Biol.">
        <title>Specific interactions between Dicer-like proteins and HYL1/DRB-family dsRNA-binding proteins in Arabidopsis thaliana.</title>
        <authorList>
            <person name="Hiraguri A."/>
            <person name="Itoh R."/>
            <person name="Kondo N."/>
            <person name="Nomura Y."/>
            <person name="Aizawa D."/>
            <person name="Murai Y."/>
            <person name="Koiwa H."/>
            <person name="Seki M."/>
            <person name="Shinozaki K."/>
            <person name="Fukuhara T."/>
        </authorList>
    </citation>
    <scope>FUNCTION</scope>
    <scope>SUBCELLULAR LOCATION</scope>
    <scope>INTERACTION WITH DRB1; DRB2 AND DRB5</scope>
</reference>
<reference key="7">
    <citation type="journal article" date="2006" name="RNA">
        <title>The interaction between DCL1 and HYL1 is important for efficient and precise processing of pri-miRNA in plant microRNA biogenesis.</title>
        <authorList>
            <person name="Kurihara Y."/>
            <person name="Takashi Y."/>
            <person name="Watanabe Y."/>
        </authorList>
    </citation>
    <scope>FUNCTION</scope>
    <scope>INTERACTION WITH DRB1</scope>
</reference>
<reference key="8">
    <citation type="journal article" date="2007" name="Curr. Biol.">
        <title>Identification of nuclear dicing bodies containing proteins for microRNA biogenesis in living Arabidopsis plants.</title>
        <authorList>
            <person name="Fang Y."/>
            <person name="Spector D.L."/>
        </authorList>
    </citation>
    <scope>SUBCELLULAR LOCATION</scope>
</reference>
<reference key="9">
    <citation type="journal article" date="2007" name="Genes Dev.">
        <title>A novel class of bacteria-induced small RNAs in Arabidopsis.</title>
        <authorList>
            <person name="Katiyar-Agarwal S."/>
            <person name="Gao S."/>
            <person name="Vivian-Smith A."/>
            <person name="Jin H."/>
        </authorList>
    </citation>
    <scope>FUNCTION</scope>
</reference>
<reference key="10">
    <citation type="journal article" date="2007" name="Genetics">
        <title>DICER-LIKE 1 and DICER-LIKE 3 redundantly act to promote flowering via repression of FLOWERING LOCUS C in Arabidopsis thaliana.</title>
        <authorList>
            <person name="Schmitz R.J."/>
            <person name="Hong L."/>
            <person name="Fitzpatrick K.E."/>
            <person name="Amasino R.M."/>
        </authorList>
    </citation>
    <scope>FUNCTION</scope>
</reference>
<reference key="11">
    <citation type="journal article" date="2008" name="Proc. Natl. Acad. Sci. U.S.A.">
        <title>The RNA-binding proteins HYL1 and SE promote accurate in vitro processing of pri-miRNA by DCL1.</title>
        <authorList>
            <person name="Dong Z."/>
            <person name="Han M.-H."/>
            <person name="Fedoroff N."/>
        </authorList>
    </citation>
    <scope>FUNCTION</scope>
</reference>
<reference key="12">
    <citation type="journal article" date="2008" name="Proc. Natl. Acad. Sci. U.S.A.">
        <title>The FHA domain proteins DAWDLE in Arabidopsis and SNIP1 in humans act in small RNA biogenesis.</title>
        <authorList>
            <person name="Yu B."/>
            <person name="Bi L."/>
            <person name="Zheng B."/>
            <person name="Ji L."/>
            <person name="Chevalier D."/>
            <person name="Agarwal M."/>
            <person name="Ramachandran V."/>
            <person name="Li W."/>
            <person name="Lagrange T."/>
            <person name="Walker J.C."/>
            <person name="Chen X."/>
        </authorList>
    </citation>
    <scope>INTERACTION WITH DDL</scope>
</reference>
<reference key="13">
    <citation type="journal article" date="2008" name="Proc. Natl. Acad. Sci. U.S.A.">
        <title>Arabidopsis DRB4, AGO1, AGO7, and RDR6 participate in a DCL4-initiated antiviral RNA silencing pathway negatively regulated by DCL1.</title>
        <authorList>
            <person name="Qu F."/>
            <person name="Ye X."/>
            <person name="Morris T.J."/>
        </authorList>
    </citation>
    <scope>FUNCTION</scope>
</reference>
<reference key="14">
    <citation type="journal article" date="2009" name="RNA">
        <title>A dominant mutation in DCL1 suppresses the hyl1 mutant phenotype by promoting the processing of miRNA.</title>
        <authorList>
            <person name="Tagami Y."/>
            <person name="Motose H."/>
            <person name="Watanabe Y."/>
        </authorList>
    </citation>
    <scope>MUTAGENESIS OF GLU-395</scope>
</reference>
<reference key="15">
    <citation type="journal article" date="2013" name="PLoS ONE">
        <title>Genome-wide comparative in silico analysis of the RNA helicase gene family in Zea mays and Glycine max: a comparison with Arabidopsis and Oryza sativa.</title>
        <authorList>
            <person name="Xu R."/>
            <person name="Zhang S."/>
            <person name="Huang J."/>
            <person name="Zheng C."/>
        </authorList>
    </citation>
    <scope>GENE FAMILY</scope>
</reference>
<dbReference type="EC" id="3.1.26.-"/>
<dbReference type="EMBL" id="AF187317">
    <property type="protein sequence ID" value="AAF03534.1"/>
    <property type="molecule type" value="mRNA"/>
</dbReference>
<dbReference type="EMBL" id="AF292940">
    <property type="protein sequence ID" value="AAG38019.1"/>
    <property type="molecule type" value="mRNA"/>
</dbReference>
<dbReference type="EMBL" id="AF292941">
    <property type="protein sequence ID" value="AAG38020.1"/>
    <property type="molecule type" value="Genomic_DNA"/>
</dbReference>
<dbReference type="EMBL" id="AC007323">
    <property type="protein sequence ID" value="AAF26461.1"/>
    <property type="status" value="ALT_SEQ"/>
    <property type="molecule type" value="Genomic_DNA"/>
</dbReference>
<dbReference type="EMBL" id="CP002684">
    <property type="protein sequence ID" value="AEE27220.1"/>
    <property type="molecule type" value="Genomic_DNA"/>
</dbReference>
<dbReference type="RefSeq" id="NP_171612.1">
    <molecule id="Q9SP32-1"/>
    <property type="nucleotide sequence ID" value="NM_099986.4"/>
</dbReference>
<dbReference type="PDB" id="2LRS">
    <property type="method" value="NMR"/>
    <property type="chains" value="A=1837-1907"/>
</dbReference>
<dbReference type="PDB" id="7ELD">
    <property type="method" value="EM"/>
    <property type="resolution" value="4.60 A"/>
    <property type="chains" value="A=1-1909"/>
</dbReference>
<dbReference type="PDB" id="7ELE">
    <property type="method" value="EM"/>
    <property type="resolution" value="4.90 A"/>
    <property type="chains" value="A=1-1909"/>
</dbReference>
<dbReference type="PDBsum" id="2LRS"/>
<dbReference type="PDBsum" id="7ELD"/>
<dbReference type="PDBsum" id="7ELE"/>
<dbReference type="BMRB" id="Q9SP32"/>
<dbReference type="EMDB" id="EMD-31181"/>
<dbReference type="EMDB" id="EMD-31182"/>
<dbReference type="SMR" id="Q9SP32"/>
<dbReference type="BioGRID" id="24809">
    <property type="interactions" value="10"/>
</dbReference>
<dbReference type="DIP" id="DIP-33454N"/>
<dbReference type="FunCoup" id="Q9SP32">
    <property type="interactions" value="2811"/>
</dbReference>
<dbReference type="IntAct" id="Q9SP32">
    <property type="interactions" value="6"/>
</dbReference>
<dbReference type="STRING" id="3702.Q9SP32"/>
<dbReference type="iPTMnet" id="Q9SP32"/>
<dbReference type="PaxDb" id="3702-AT1G01040.2"/>
<dbReference type="ProteomicsDB" id="222753">
    <molecule id="Q9SP32-1"/>
</dbReference>
<dbReference type="EnsemblPlants" id="AT1G01040.1">
    <molecule id="Q9SP32-1"/>
    <property type="protein sequence ID" value="AT1G01040.1"/>
    <property type="gene ID" value="AT1G01040"/>
</dbReference>
<dbReference type="GeneID" id="839574"/>
<dbReference type="Gramene" id="AT1G01040.1">
    <molecule id="Q9SP32-1"/>
    <property type="protein sequence ID" value="AT1G01040.1"/>
    <property type="gene ID" value="AT1G01040"/>
</dbReference>
<dbReference type="KEGG" id="ath:AT1G01040"/>
<dbReference type="Araport" id="AT1G01040"/>
<dbReference type="TAIR" id="AT1G01040">
    <property type="gene designation" value="DCL1"/>
</dbReference>
<dbReference type="eggNOG" id="KOG0701">
    <property type="taxonomic scope" value="Eukaryota"/>
</dbReference>
<dbReference type="HOGENOM" id="CLU_000907_4_4_1"/>
<dbReference type="InParanoid" id="Q9SP32"/>
<dbReference type="PhylomeDB" id="Q9SP32"/>
<dbReference type="CD-CODE" id="E1C65F8A">
    <property type="entry name" value="Nuclear dicing body"/>
</dbReference>
<dbReference type="EvolutionaryTrace" id="Q9SP32"/>
<dbReference type="PRO" id="PR:Q9SP32"/>
<dbReference type="Proteomes" id="UP000006548">
    <property type="component" value="Chromosome 1"/>
</dbReference>
<dbReference type="ExpressionAtlas" id="Q9SP32">
    <property type="expression patterns" value="baseline and differential"/>
</dbReference>
<dbReference type="GO" id="GO:0005634">
    <property type="term" value="C:nucleus"/>
    <property type="evidence" value="ECO:0007669"/>
    <property type="project" value="UniProtKB-SubCell"/>
</dbReference>
<dbReference type="GO" id="GO:0005524">
    <property type="term" value="F:ATP binding"/>
    <property type="evidence" value="ECO:0007669"/>
    <property type="project" value="UniProtKB-KW"/>
</dbReference>
<dbReference type="GO" id="GO:0003677">
    <property type="term" value="F:DNA binding"/>
    <property type="evidence" value="ECO:0000314"/>
    <property type="project" value="DisProt"/>
</dbReference>
<dbReference type="GO" id="GO:0003725">
    <property type="term" value="F:double-stranded RNA binding"/>
    <property type="evidence" value="ECO:0000353"/>
    <property type="project" value="DisProt"/>
</dbReference>
<dbReference type="GO" id="GO:0004386">
    <property type="term" value="F:helicase activity"/>
    <property type="evidence" value="ECO:0007669"/>
    <property type="project" value="UniProtKB-KW"/>
</dbReference>
<dbReference type="GO" id="GO:0046872">
    <property type="term" value="F:metal ion binding"/>
    <property type="evidence" value="ECO:0007669"/>
    <property type="project" value="UniProtKB-KW"/>
</dbReference>
<dbReference type="GO" id="GO:0004525">
    <property type="term" value="F:ribonuclease III activity"/>
    <property type="evidence" value="ECO:0007669"/>
    <property type="project" value="InterPro"/>
</dbReference>
<dbReference type="GO" id="GO:0006364">
    <property type="term" value="P:rRNA processing"/>
    <property type="evidence" value="ECO:0007669"/>
    <property type="project" value="InterPro"/>
</dbReference>
<dbReference type="GO" id="GO:0010267">
    <property type="term" value="P:ta-siRNA processing"/>
    <property type="evidence" value="ECO:0000315"/>
    <property type="project" value="FlyBase"/>
</dbReference>
<dbReference type="CDD" id="cd18034">
    <property type="entry name" value="DEXHc_dicer"/>
    <property type="match status" value="1"/>
</dbReference>
<dbReference type="CDD" id="cd19869">
    <property type="entry name" value="DSRM_DCL_plant"/>
    <property type="match status" value="1"/>
</dbReference>
<dbReference type="CDD" id="cd02844">
    <property type="entry name" value="PAZ_CAF_like"/>
    <property type="match status" value="1"/>
</dbReference>
<dbReference type="CDD" id="cd00593">
    <property type="entry name" value="RIBOc"/>
    <property type="match status" value="2"/>
</dbReference>
<dbReference type="CDD" id="cd18802">
    <property type="entry name" value="SF2_C_dicer"/>
    <property type="match status" value="1"/>
</dbReference>
<dbReference type="DisProt" id="DP01467"/>
<dbReference type="FunFam" id="2.170.260.10:FF:000005">
    <property type="entry name" value="Endoribonuclease Dicer 1"/>
    <property type="match status" value="1"/>
</dbReference>
<dbReference type="FunFam" id="3.30.160.20:FF:000032">
    <property type="entry name" value="endoribonuclease Dicer homolog 1"/>
    <property type="match status" value="1"/>
</dbReference>
<dbReference type="FunFam" id="1.10.1520.10:FF:000004">
    <property type="entry name" value="Endoribonuclease dicer-like 1"/>
    <property type="match status" value="1"/>
</dbReference>
<dbReference type="FunFam" id="3.30.160.380:FF:000001">
    <property type="entry name" value="Endoribonuclease dicer-like 1"/>
    <property type="match status" value="1"/>
</dbReference>
<dbReference type="FunFam" id="3.40.50.300:FF:000420">
    <property type="entry name" value="Endoribonuclease dicer-like 1"/>
    <property type="match status" value="1"/>
</dbReference>
<dbReference type="FunFam" id="1.10.1520.10:FF:000007">
    <property type="entry name" value="Endoribonuclease dicer-like protein"/>
    <property type="match status" value="1"/>
</dbReference>
<dbReference type="FunFam" id="3.40.50.300:FF:000705">
    <property type="entry name" value="Endoribonuclease dicer-like protein"/>
    <property type="match status" value="1"/>
</dbReference>
<dbReference type="Gene3D" id="3.30.160.20">
    <property type="match status" value="2"/>
</dbReference>
<dbReference type="Gene3D" id="3.30.160.380">
    <property type="entry name" value="Dicer dimerisation domain"/>
    <property type="match status" value="1"/>
</dbReference>
<dbReference type="Gene3D" id="3.40.50.300">
    <property type="entry name" value="P-loop containing nucleotide triphosphate hydrolases"/>
    <property type="match status" value="2"/>
</dbReference>
<dbReference type="Gene3D" id="2.170.260.10">
    <property type="entry name" value="paz domain"/>
    <property type="match status" value="1"/>
</dbReference>
<dbReference type="Gene3D" id="1.10.1520.10">
    <property type="entry name" value="Ribonuclease III domain"/>
    <property type="match status" value="2"/>
</dbReference>
<dbReference type="HAMAP" id="MF_00104">
    <property type="entry name" value="RNase_III"/>
    <property type="match status" value="1"/>
</dbReference>
<dbReference type="InterPro" id="IPR038248">
    <property type="entry name" value="Dicer_dimer_sf"/>
</dbReference>
<dbReference type="InterPro" id="IPR005034">
    <property type="entry name" value="Dicer_dimerisation_dom"/>
</dbReference>
<dbReference type="InterPro" id="IPR014720">
    <property type="entry name" value="dsRBD_dom"/>
</dbReference>
<dbReference type="InterPro" id="IPR006935">
    <property type="entry name" value="Helicase/UvrB_N"/>
</dbReference>
<dbReference type="InterPro" id="IPR014001">
    <property type="entry name" value="Helicase_ATP-bd"/>
</dbReference>
<dbReference type="InterPro" id="IPR001650">
    <property type="entry name" value="Helicase_C-like"/>
</dbReference>
<dbReference type="InterPro" id="IPR027417">
    <property type="entry name" value="P-loop_NTPase"/>
</dbReference>
<dbReference type="InterPro" id="IPR003100">
    <property type="entry name" value="PAZ_dom"/>
</dbReference>
<dbReference type="InterPro" id="IPR036085">
    <property type="entry name" value="PAZ_dom_sf"/>
</dbReference>
<dbReference type="InterPro" id="IPR011907">
    <property type="entry name" value="RNase_III"/>
</dbReference>
<dbReference type="InterPro" id="IPR000999">
    <property type="entry name" value="RNase_III_dom"/>
</dbReference>
<dbReference type="InterPro" id="IPR036389">
    <property type="entry name" value="RNase_III_sf"/>
</dbReference>
<dbReference type="PANTHER" id="PTHR14950">
    <property type="entry name" value="DICER-RELATED"/>
    <property type="match status" value="1"/>
</dbReference>
<dbReference type="PANTHER" id="PTHR14950:SF37">
    <property type="entry name" value="ENDORIBONUCLEASE DICER"/>
    <property type="match status" value="1"/>
</dbReference>
<dbReference type="Pfam" id="PF03368">
    <property type="entry name" value="Dicer_dimer"/>
    <property type="match status" value="1"/>
</dbReference>
<dbReference type="Pfam" id="PF14709">
    <property type="entry name" value="DND1_DSRM"/>
    <property type="match status" value="1"/>
</dbReference>
<dbReference type="Pfam" id="PF00035">
    <property type="entry name" value="dsrm"/>
    <property type="match status" value="1"/>
</dbReference>
<dbReference type="Pfam" id="PF00271">
    <property type="entry name" value="Helicase_C"/>
    <property type="match status" value="1"/>
</dbReference>
<dbReference type="Pfam" id="PF02170">
    <property type="entry name" value="PAZ"/>
    <property type="match status" value="1"/>
</dbReference>
<dbReference type="Pfam" id="PF04851">
    <property type="entry name" value="ResIII"/>
    <property type="match status" value="1"/>
</dbReference>
<dbReference type="Pfam" id="PF00636">
    <property type="entry name" value="Ribonuclease_3"/>
    <property type="match status" value="2"/>
</dbReference>
<dbReference type="SMART" id="SM00487">
    <property type="entry name" value="DEXDc"/>
    <property type="match status" value="1"/>
</dbReference>
<dbReference type="SMART" id="SM00358">
    <property type="entry name" value="DSRM"/>
    <property type="match status" value="2"/>
</dbReference>
<dbReference type="SMART" id="SM00490">
    <property type="entry name" value="HELICc"/>
    <property type="match status" value="1"/>
</dbReference>
<dbReference type="SMART" id="SM00949">
    <property type="entry name" value="PAZ"/>
    <property type="match status" value="1"/>
</dbReference>
<dbReference type="SMART" id="SM00535">
    <property type="entry name" value="RIBOc"/>
    <property type="match status" value="2"/>
</dbReference>
<dbReference type="SUPFAM" id="SSF54768">
    <property type="entry name" value="dsRNA-binding domain-like"/>
    <property type="match status" value="2"/>
</dbReference>
<dbReference type="SUPFAM" id="SSF52540">
    <property type="entry name" value="P-loop containing nucleoside triphosphate hydrolases"/>
    <property type="match status" value="1"/>
</dbReference>
<dbReference type="SUPFAM" id="SSF101690">
    <property type="entry name" value="PAZ domain"/>
    <property type="match status" value="1"/>
</dbReference>
<dbReference type="SUPFAM" id="SSF69065">
    <property type="entry name" value="RNase III domain-like"/>
    <property type="match status" value="2"/>
</dbReference>
<dbReference type="PROSITE" id="PS51327">
    <property type="entry name" value="DICER_DSRBF"/>
    <property type="match status" value="1"/>
</dbReference>
<dbReference type="PROSITE" id="PS50137">
    <property type="entry name" value="DS_RBD"/>
    <property type="match status" value="2"/>
</dbReference>
<dbReference type="PROSITE" id="PS51192">
    <property type="entry name" value="HELICASE_ATP_BIND_1"/>
    <property type="match status" value="1"/>
</dbReference>
<dbReference type="PROSITE" id="PS51194">
    <property type="entry name" value="HELICASE_CTER"/>
    <property type="match status" value="1"/>
</dbReference>
<dbReference type="PROSITE" id="PS50821">
    <property type="entry name" value="PAZ"/>
    <property type="match status" value="1"/>
</dbReference>
<dbReference type="PROSITE" id="PS00517">
    <property type="entry name" value="RNASE_3_1"/>
    <property type="match status" value="1"/>
</dbReference>
<dbReference type="PROSITE" id="PS50142">
    <property type="entry name" value="RNASE_3_2"/>
    <property type="match status" value="2"/>
</dbReference>
<feature type="chain" id="PRO_0000180472" description="Endoribonuclease Dicer homolog 1">
    <location>
        <begin position="1"/>
        <end position="1909"/>
    </location>
</feature>
<feature type="domain" description="Helicase ATP-binding">
    <location>
        <begin position="256"/>
        <end position="433"/>
    </location>
</feature>
<feature type="domain" description="Helicase C-terminal">
    <location>
        <begin position="651"/>
        <end position="812"/>
    </location>
</feature>
<feature type="domain" description="Dicer dsRNA-binding fold">
    <location>
        <begin position="840"/>
        <end position="935"/>
    </location>
</feature>
<feature type="domain" description="PAZ" evidence="3">
    <location>
        <begin position="1189"/>
        <end position="1318"/>
    </location>
</feature>
<feature type="domain" description="RNase III 1">
    <location>
        <begin position="1342"/>
        <end position="1518"/>
    </location>
</feature>
<feature type="domain" description="RNase III 2">
    <location>
        <begin position="1559"/>
        <end position="1707"/>
    </location>
</feature>
<feature type="domain" description="DRBM 1">
    <location>
        <begin position="1733"/>
        <end position="1796"/>
    </location>
</feature>
<feature type="domain" description="DRBM 2">
    <location>
        <begin position="1831"/>
        <end position="1906"/>
    </location>
</feature>
<feature type="region of interest" description="Disordered" evidence="4">
    <location>
        <begin position="99"/>
        <end position="177"/>
    </location>
</feature>
<feature type="region of interest" description="Disordered" evidence="4">
    <location>
        <begin position="929"/>
        <end position="952"/>
    </location>
</feature>
<feature type="region of interest" description="Disordered" evidence="4">
    <location>
        <begin position="1801"/>
        <end position="1831"/>
    </location>
</feature>
<feature type="short sequence motif" description="DECH box">
    <location>
        <begin position="378"/>
        <end position="381"/>
    </location>
</feature>
<feature type="compositionally biased region" description="Basic and acidic residues" evidence="4">
    <location>
        <begin position="110"/>
        <end position="124"/>
    </location>
</feature>
<feature type="compositionally biased region" description="Polar residues" evidence="4">
    <location>
        <begin position="131"/>
        <end position="146"/>
    </location>
</feature>
<feature type="compositionally biased region" description="Basic and acidic residues" evidence="4">
    <location>
        <begin position="147"/>
        <end position="177"/>
    </location>
</feature>
<feature type="binding site" evidence="2">
    <location>
        <begin position="269"/>
        <end position="276"/>
    </location>
    <ligand>
        <name>ATP</name>
        <dbReference type="ChEBI" id="CHEBI:30616"/>
    </ligand>
</feature>
<feature type="binding site" evidence="1">
    <location>
        <position position="1597"/>
    </location>
    <ligand>
        <name>Mg(2+)</name>
        <dbReference type="ChEBI" id="CHEBI:18420"/>
    </ligand>
</feature>
<feature type="binding site" evidence="1">
    <location>
        <position position="1693"/>
    </location>
    <ligand>
        <name>Mg(2+)</name>
        <dbReference type="ChEBI" id="CHEBI:18420"/>
    </ligand>
</feature>
<feature type="binding site" evidence="1">
    <location>
        <position position="1696"/>
    </location>
    <ligand>
        <name>Mg(2+)</name>
        <dbReference type="ChEBI" id="CHEBI:18420"/>
    </ligand>
</feature>
<feature type="site" description="Important for activity" evidence="1">
    <location>
        <position position="1689"/>
    </location>
</feature>
<feature type="mutagenesis site" description="In dcl1-13; early-flowering and decreased number of leaves. Suppresses hyl1 mutant phenotype." evidence="15">
    <original>E</original>
    <variation>K</variation>
    <location>
        <position position="395"/>
    </location>
</feature>
<feature type="mutagenesis site" description="In sin1-1; impaired reproductive development." evidence="6">
    <original>P</original>
    <variation>S</variation>
    <location>
        <position position="415"/>
    </location>
</feature>
<feature type="mutagenesis site" description="In sin1-2; impaired reproductive development." evidence="6">
    <original>I</original>
    <variation>K</variation>
    <location>
        <position position="431"/>
    </location>
</feature>
<feature type="mutagenesis site" description="In caf-1; converts the floral meristem to an indeterminate state." evidence="5">
    <original>NDICLRK</original>
    <variation>IAEIDPG</variation>
    <location>
        <begin position="1837"/>
        <end position="1843"/>
    </location>
</feature>
<feature type="mutagenesis site" description="In caf-1; converts the floral meristem to an indeterminate state." evidence="5">
    <location>
        <begin position="1844"/>
        <end position="1909"/>
    </location>
</feature>
<feature type="sequence conflict" description="In Ref. 1; AAF03534." evidence="16" ref="1">
    <original>S</original>
    <variation>F</variation>
    <location>
        <position position="148"/>
    </location>
</feature>
<feature type="sequence conflict" description="In Ref. 1; AAF03534." evidence="16" ref="1">
    <original>Y</original>
    <variation>H</variation>
    <location>
        <position position="988"/>
    </location>
</feature>
<feature type="helix" evidence="17">
    <location>
        <begin position="1838"/>
        <end position="1842"/>
    </location>
</feature>
<feature type="strand" evidence="17">
    <location>
        <begin position="1849"/>
        <end position="1854"/>
    </location>
</feature>
<feature type="strand" evidence="17">
    <location>
        <begin position="1864"/>
        <end position="1869"/>
    </location>
</feature>
<feature type="turn" evidence="17">
    <location>
        <begin position="1873"/>
        <end position="1875"/>
    </location>
</feature>
<feature type="strand" evidence="17">
    <location>
        <begin position="1886"/>
        <end position="1888"/>
    </location>
</feature>
<feature type="helix" evidence="17">
    <location>
        <begin position="1889"/>
        <end position="1903"/>
    </location>
</feature>
<feature type="helix" evidence="17">
    <location>
        <begin position="1904"/>
        <end position="1906"/>
    </location>
</feature>